<sequence length="105" mass="11749">MGDVEKGKKIFIMKCSQCHTVEKGGKHKTGPNLHGLFGRKTGQAPGYSYTAANKNKGIIWGEDTLMEYLENPKKYIPGTKMIFVGIKKKEERADLIAYLKKATNE</sequence>
<comment type="function">
    <text evidence="1">Electron carrier protein. The oxidized form of the cytochrome c heme group can accept an electron from the heme group of the cytochrome c1 subunit of cytochrome reductase. Cytochrome c then transfers this electron to the cytochrome oxidase complex, the final protein carrier in the mitochondrial electron-transport chain (By similarity).</text>
</comment>
<comment type="function">
    <text evidence="1">Plays a role in apoptosis. Suppression of the anti-apoptotic members or activation of the pro-apoptotic members of the Bcl-2 family leads to altered mitochondrial membrane permeability resulting in release of cytochrome c into the cytosol. Binding of cytochrome c to Apaf-1 triggers the activation of caspase-9, which then accelerates apoptosis by activating other caspases (By similarity).</text>
</comment>
<comment type="subcellular location">
    <subcellularLocation>
        <location>Mitochondrion intermembrane space</location>
    </subcellularLocation>
    <text>Loosely associated with the inner membrane.</text>
</comment>
<comment type="PTM">
    <text>Binds 1 heme c group covalently per subunit.</text>
</comment>
<comment type="PTM">
    <text evidence="1">Phosphorylation at Tyr-49 and Tyr-98 both reduce by half the turnover in the reaction with cytochrome c oxidase, down-regulating mitochondrial respiration.</text>
</comment>
<comment type="similarity">
    <text evidence="5">Belongs to the cytochrome c family.</text>
</comment>
<comment type="online information" name="Protein Spotlight">
    <link uri="https://www.proteinspotlight.org/back_issues/076"/>
    <text>Life shuttle - Issue 76 of November 2006</text>
</comment>
<name>CYC_GORGO</name>
<keyword id="KW-0007">Acetylation</keyword>
<keyword id="KW-0053">Apoptosis</keyword>
<keyword id="KW-0249">Electron transport</keyword>
<keyword id="KW-0349">Heme</keyword>
<keyword id="KW-0408">Iron</keyword>
<keyword id="KW-0479">Metal-binding</keyword>
<keyword id="KW-0496">Mitochondrion</keyword>
<keyword id="KW-0597">Phosphoprotein</keyword>
<keyword id="KW-1185">Reference proteome</keyword>
<keyword id="KW-0679">Respiratory chain</keyword>
<keyword id="KW-0813">Transport</keyword>
<evidence type="ECO:0000250" key="1"/>
<evidence type="ECO:0000250" key="2">
    <source>
        <dbReference type="UniProtKB" id="P62894"/>
    </source>
</evidence>
<evidence type="ECO:0000250" key="3">
    <source>
        <dbReference type="UniProtKB" id="P62897"/>
    </source>
</evidence>
<evidence type="ECO:0000255" key="4">
    <source>
        <dbReference type="PROSITE-ProRule" id="PRU00433"/>
    </source>
</evidence>
<evidence type="ECO:0000305" key="5"/>
<gene>
    <name type="primary">CYCS</name>
    <name type="synonym">CYC</name>
</gene>
<organism>
    <name type="scientific">Gorilla gorilla gorilla</name>
    <name type="common">Western lowland gorilla</name>
    <dbReference type="NCBI Taxonomy" id="9595"/>
    <lineage>
        <taxon>Eukaryota</taxon>
        <taxon>Metazoa</taxon>
        <taxon>Chordata</taxon>
        <taxon>Craniata</taxon>
        <taxon>Vertebrata</taxon>
        <taxon>Euteleostomi</taxon>
        <taxon>Mammalia</taxon>
        <taxon>Eutheria</taxon>
        <taxon>Euarchontoglires</taxon>
        <taxon>Primates</taxon>
        <taxon>Haplorrhini</taxon>
        <taxon>Catarrhini</taxon>
        <taxon>Hominidae</taxon>
        <taxon>Gorilla</taxon>
    </lineage>
</organism>
<protein>
    <recommendedName>
        <fullName>Cytochrome c</fullName>
    </recommendedName>
</protein>
<dbReference type="EMBL" id="AY268593">
    <property type="protein sequence ID" value="AAP49488.1"/>
    <property type="molecule type" value="Genomic_DNA"/>
</dbReference>
<dbReference type="SMR" id="Q6WUX8"/>
<dbReference type="FunCoup" id="Q6WUX8">
    <property type="interactions" value="2430"/>
</dbReference>
<dbReference type="STRING" id="9593.ENSGGOP00000028382"/>
<dbReference type="Ensembl" id="ENSGGOT00000026693.2">
    <property type="protein sequence ID" value="ENSGGOP00000028382.1"/>
    <property type="gene ID" value="ENSGGOG00000024588.2"/>
</dbReference>
<dbReference type="GeneID" id="101135431"/>
<dbReference type="KEGG" id="ggo:101135431"/>
<dbReference type="eggNOG" id="KOG3453">
    <property type="taxonomic scope" value="Eukaryota"/>
</dbReference>
<dbReference type="GeneTree" id="ENSGT00390000009405"/>
<dbReference type="HOGENOM" id="CLU_060944_3_0_1"/>
<dbReference type="InParanoid" id="Q6WUX8"/>
<dbReference type="OMA" id="KARCAQC"/>
<dbReference type="OrthoDB" id="564at9604"/>
<dbReference type="Proteomes" id="UP000001519">
    <property type="component" value="Chromosome 7"/>
</dbReference>
<dbReference type="Bgee" id="ENSGGOG00000024588">
    <property type="expression patterns" value="Expressed in heart and 6 other cell types or tissues"/>
</dbReference>
<dbReference type="GO" id="GO:0043293">
    <property type="term" value="C:apoptosome"/>
    <property type="evidence" value="ECO:0007669"/>
    <property type="project" value="Ensembl"/>
</dbReference>
<dbReference type="GO" id="GO:0005829">
    <property type="term" value="C:cytosol"/>
    <property type="evidence" value="ECO:0000250"/>
    <property type="project" value="UniProtKB"/>
</dbReference>
<dbReference type="GO" id="GO:0005758">
    <property type="term" value="C:mitochondrial intermembrane space"/>
    <property type="evidence" value="ECO:0000318"/>
    <property type="project" value="GO_Central"/>
</dbReference>
<dbReference type="GO" id="GO:0005634">
    <property type="term" value="C:nucleus"/>
    <property type="evidence" value="ECO:0007669"/>
    <property type="project" value="Ensembl"/>
</dbReference>
<dbReference type="GO" id="GO:0009055">
    <property type="term" value="F:electron transfer activity"/>
    <property type="evidence" value="ECO:0000318"/>
    <property type="project" value="GO_Central"/>
</dbReference>
<dbReference type="GO" id="GO:0020037">
    <property type="term" value="F:heme binding"/>
    <property type="evidence" value="ECO:0007669"/>
    <property type="project" value="InterPro"/>
</dbReference>
<dbReference type="GO" id="GO:0046872">
    <property type="term" value="F:metal ion binding"/>
    <property type="evidence" value="ECO:0007669"/>
    <property type="project" value="UniProtKB-KW"/>
</dbReference>
<dbReference type="GO" id="GO:0006915">
    <property type="term" value="P:apoptotic process"/>
    <property type="evidence" value="ECO:0007669"/>
    <property type="project" value="UniProtKB-KW"/>
</dbReference>
<dbReference type="GO" id="GO:0006123">
    <property type="term" value="P:mitochondrial electron transport, cytochrome c to oxygen"/>
    <property type="evidence" value="ECO:0000318"/>
    <property type="project" value="GO_Central"/>
</dbReference>
<dbReference type="GO" id="GO:0006122">
    <property type="term" value="P:mitochondrial electron transport, ubiquinol to cytochrome c"/>
    <property type="evidence" value="ECO:0000318"/>
    <property type="project" value="GO_Central"/>
</dbReference>
<dbReference type="FunFam" id="1.10.760.10:FF:000008">
    <property type="entry name" value="Cytochrome c"/>
    <property type="match status" value="1"/>
</dbReference>
<dbReference type="Gene3D" id="1.10.760.10">
    <property type="entry name" value="Cytochrome c-like domain"/>
    <property type="match status" value="1"/>
</dbReference>
<dbReference type="InterPro" id="IPR009056">
    <property type="entry name" value="Cyt_c-like_dom"/>
</dbReference>
<dbReference type="InterPro" id="IPR036909">
    <property type="entry name" value="Cyt_c-like_dom_sf"/>
</dbReference>
<dbReference type="InterPro" id="IPR002327">
    <property type="entry name" value="Cyt_c_1A/1B"/>
</dbReference>
<dbReference type="PANTHER" id="PTHR11961">
    <property type="entry name" value="CYTOCHROME C"/>
    <property type="match status" value="1"/>
</dbReference>
<dbReference type="Pfam" id="PF00034">
    <property type="entry name" value="Cytochrom_C"/>
    <property type="match status" value="1"/>
</dbReference>
<dbReference type="PRINTS" id="PR00604">
    <property type="entry name" value="CYTCHRMECIAB"/>
</dbReference>
<dbReference type="SUPFAM" id="SSF46626">
    <property type="entry name" value="Cytochrome c"/>
    <property type="match status" value="1"/>
</dbReference>
<dbReference type="PROSITE" id="PS51007">
    <property type="entry name" value="CYTC"/>
    <property type="match status" value="1"/>
</dbReference>
<proteinExistence type="inferred from homology"/>
<feature type="initiator methionine" description="Removed" evidence="2">
    <location>
        <position position="1"/>
    </location>
</feature>
<feature type="chain" id="PRO_0000108215" description="Cytochrome c">
    <location>
        <begin position="2"/>
        <end position="105"/>
    </location>
</feature>
<feature type="binding site" description="covalent" evidence="4">
    <location>
        <position position="15"/>
    </location>
    <ligand>
        <name>heme c</name>
        <dbReference type="ChEBI" id="CHEBI:61717"/>
    </ligand>
</feature>
<feature type="binding site" description="covalent" evidence="4">
    <location>
        <position position="18"/>
    </location>
    <ligand>
        <name>heme c</name>
        <dbReference type="ChEBI" id="CHEBI:61717"/>
    </ligand>
</feature>
<feature type="binding site" description="axial binding residue" evidence="4">
    <location>
        <position position="19"/>
    </location>
    <ligand>
        <name>heme c</name>
        <dbReference type="ChEBI" id="CHEBI:61717"/>
    </ligand>
    <ligandPart>
        <name>Fe</name>
        <dbReference type="ChEBI" id="CHEBI:18248"/>
    </ligandPart>
</feature>
<feature type="binding site" description="axial binding residue" evidence="4">
    <location>
        <position position="81"/>
    </location>
    <ligand>
        <name>heme c</name>
        <dbReference type="ChEBI" id="CHEBI:61717"/>
    </ligand>
    <ligandPart>
        <name>Fe</name>
        <dbReference type="ChEBI" id="CHEBI:18248"/>
    </ligandPart>
</feature>
<feature type="modified residue" description="N-acetylglycine" evidence="2">
    <location>
        <position position="2"/>
    </location>
</feature>
<feature type="modified residue" description="Phosphotyrosine" evidence="2">
    <location>
        <position position="49"/>
    </location>
</feature>
<feature type="modified residue" description="N6-succinyllysine" evidence="3">
    <location>
        <position position="56"/>
    </location>
</feature>
<feature type="modified residue" description="N6-acetyllysine; alternate" evidence="3">
    <location>
        <position position="73"/>
    </location>
</feature>
<feature type="modified residue" description="N6-succinyllysine; alternate" evidence="3">
    <location>
        <position position="73"/>
    </location>
</feature>
<feature type="modified residue" description="Phosphotyrosine" evidence="2">
    <location>
        <position position="98"/>
    </location>
</feature>
<feature type="modified residue" description="N6-acetyllysine" evidence="3">
    <location>
        <position position="100"/>
    </location>
</feature>
<reference key="1">
    <citation type="journal article" date="2003" name="Proc. Natl. Acad. Sci. U.S.A.">
        <title>Implications of natural selection in shaping 99.4% nonsynonymous DNA identity between humans and chimpanzees: enlarging genus Homo.</title>
        <authorList>
            <person name="Wildman D.E."/>
            <person name="Uddin M."/>
            <person name="Liu G."/>
            <person name="Grossman L.I."/>
            <person name="Goodman M."/>
        </authorList>
    </citation>
    <scope>NUCLEOTIDE SEQUENCE [GENOMIC DNA]</scope>
</reference>
<accession>Q6WUX8</accession>